<dbReference type="EMBL" id="AF034787">
    <property type="protein sequence ID" value="AAB88382.1"/>
    <property type="molecule type" value="Genomic_DNA"/>
</dbReference>
<dbReference type="RefSeq" id="WP_011170561.1">
    <property type="nucleotide sequence ID" value="NZ_JAGINF010000004.1"/>
</dbReference>
<dbReference type="SMR" id="P0CW60"/>
<dbReference type="GeneID" id="41279084"/>
<dbReference type="OMA" id="GNTLEHW"/>
<dbReference type="GO" id="GO:0005524">
    <property type="term" value="F:ATP binding"/>
    <property type="evidence" value="ECO:0007669"/>
    <property type="project" value="UniProtKB-UniRule"/>
</dbReference>
<dbReference type="GO" id="GO:0016887">
    <property type="term" value="F:ATP hydrolysis activity"/>
    <property type="evidence" value="ECO:0007669"/>
    <property type="project" value="InterPro"/>
</dbReference>
<dbReference type="GO" id="GO:0140664">
    <property type="term" value="F:ATP-dependent DNA damage sensor activity"/>
    <property type="evidence" value="ECO:0007669"/>
    <property type="project" value="InterPro"/>
</dbReference>
<dbReference type="GO" id="GO:0003684">
    <property type="term" value="F:damaged DNA binding"/>
    <property type="evidence" value="ECO:0007669"/>
    <property type="project" value="UniProtKB-UniRule"/>
</dbReference>
<dbReference type="GO" id="GO:0006310">
    <property type="term" value="P:DNA recombination"/>
    <property type="evidence" value="ECO:0007669"/>
    <property type="project" value="UniProtKB-UniRule"/>
</dbReference>
<dbReference type="GO" id="GO:0006281">
    <property type="term" value="P:DNA repair"/>
    <property type="evidence" value="ECO:0007669"/>
    <property type="project" value="UniProtKB-UniRule"/>
</dbReference>
<dbReference type="Gene3D" id="3.40.50.300">
    <property type="entry name" value="P-loop containing nucleotide triphosphate hydrolases"/>
    <property type="match status" value="1"/>
</dbReference>
<dbReference type="HAMAP" id="MF_00350">
    <property type="entry name" value="RadB"/>
    <property type="match status" value="1"/>
</dbReference>
<dbReference type="InterPro" id="IPR003593">
    <property type="entry name" value="AAA+_ATPase"/>
</dbReference>
<dbReference type="InterPro" id="IPR013632">
    <property type="entry name" value="DNA_recomb/repair_Rad51_C"/>
</dbReference>
<dbReference type="InterPro" id="IPR011939">
    <property type="entry name" value="DNA_repair_and_recomb_RadB"/>
</dbReference>
<dbReference type="InterPro" id="IPR027417">
    <property type="entry name" value="P-loop_NTPase"/>
</dbReference>
<dbReference type="InterPro" id="IPR020588">
    <property type="entry name" value="RecA_ATP-bd"/>
</dbReference>
<dbReference type="NCBIfam" id="TIGR02237">
    <property type="entry name" value="recomb_radB"/>
    <property type="match status" value="1"/>
</dbReference>
<dbReference type="PANTHER" id="PTHR22942:SF47">
    <property type="entry name" value="DNA REPAIR AND RECOMBINATION PROTEIN RADB"/>
    <property type="match status" value="1"/>
</dbReference>
<dbReference type="PANTHER" id="PTHR22942">
    <property type="entry name" value="RECA/RAD51/RADA DNA STRAND-PAIRING FAMILY MEMBER"/>
    <property type="match status" value="1"/>
</dbReference>
<dbReference type="Pfam" id="PF08423">
    <property type="entry name" value="Rad51"/>
    <property type="match status" value="1"/>
</dbReference>
<dbReference type="PIRSF" id="PIRSF003336">
    <property type="entry name" value="RadB"/>
    <property type="match status" value="1"/>
</dbReference>
<dbReference type="SMART" id="SM00382">
    <property type="entry name" value="AAA"/>
    <property type="match status" value="1"/>
</dbReference>
<dbReference type="SUPFAM" id="SSF52540">
    <property type="entry name" value="P-loop containing nucleoside triphosphate hydrolases"/>
    <property type="match status" value="1"/>
</dbReference>
<dbReference type="PROSITE" id="PS50162">
    <property type="entry name" value="RECA_2"/>
    <property type="match status" value="1"/>
</dbReference>
<protein>
    <recommendedName>
        <fullName>DNA repair and recombination protein RadB</fullName>
    </recommendedName>
</protein>
<feature type="chain" id="PRO_0000150114" description="DNA repair and recombination protein RadB">
    <location>
        <begin position="1"/>
        <end position="216"/>
    </location>
</feature>
<feature type="binding site" evidence="2">
    <location>
        <begin position="20"/>
        <end position="27"/>
    </location>
    <ligand>
        <name>ATP</name>
        <dbReference type="ChEBI" id="CHEBI:30616"/>
    </ligand>
</feature>
<proteinExistence type="inferred from homology"/>
<evidence type="ECO:0000250" key="1"/>
<evidence type="ECO:0000255" key="2"/>
<evidence type="ECO:0000305" key="3"/>
<comment type="function">
    <text evidence="1">Involved in DNA repair and in homologous recombination. May regulate the cleavage reactions of the branch-structured DNA. Has a very weak ATPase activity that is not stimulated by DNA. Binds DNA but does not promote DNA strands exchange (By similarity).</text>
</comment>
<comment type="similarity">
    <text evidence="3">Belongs to the eukaryotic RecA-like protein family. RadB subfamily.</text>
</comment>
<reference key="1">
    <citation type="submission" date="1997-11" db="EMBL/GenBank/DDBJ databases">
        <authorList>
            <person name="Yu J.-P."/>
            <person name="Whitman W.B."/>
        </authorList>
    </citation>
    <scope>NUCLEOTIDE SEQUENCE [GENOMIC DNA]</scope>
    <source>
        <strain>ATCC 43000 / DSM 2067 / JCM 10722 / JJ</strain>
    </source>
</reference>
<organism>
    <name type="scientific">Methanococcus maripaludis</name>
    <name type="common">Methanococcus deltae</name>
    <dbReference type="NCBI Taxonomy" id="39152"/>
    <lineage>
        <taxon>Archaea</taxon>
        <taxon>Methanobacteriati</taxon>
        <taxon>Methanobacteriota</taxon>
        <taxon>Methanomada group</taxon>
        <taxon>Methanococci</taxon>
        <taxon>Methanococcales</taxon>
        <taxon>Methanococcaceae</taxon>
        <taxon>Methanococcus</taxon>
    </lineage>
</organism>
<sequence>MLEELLNGNIEKKTITQIYGPPGVGKTNICIISMLKAIENGKNVVYIDTEGSLSIERIKQLSGKDCDELLKNIIIYEPSSFEEQSEALEKIFLLENVGLIIIDGIVSLYRLELCDKINENTKLNRMLGKQISNLLKVSRQKNSGILITNQVKDSINGIEPAGGRLLEYWSKSIIKIEKSESIRKLTLEKHRHAKEGENLRFKILQNGLEIINKSYQ</sequence>
<gene>
    <name type="primary">radB</name>
</gene>
<name>RADB_METMI</name>
<keyword id="KW-0067">ATP-binding</keyword>
<keyword id="KW-0227">DNA damage</keyword>
<keyword id="KW-0233">DNA recombination</keyword>
<keyword id="KW-0238">DNA-binding</keyword>
<keyword id="KW-0547">Nucleotide-binding</keyword>
<accession>P0CW60</accession>
<accession>O50248</accession>